<gene>
    <name type="primary">DBP7</name>
    <name type="ordered locus">CNJ01590</name>
</gene>
<reference key="1">
    <citation type="journal article" date="2005" name="Science">
        <title>The genome of the basidiomycetous yeast and human pathogen Cryptococcus neoformans.</title>
        <authorList>
            <person name="Loftus B.J."/>
            <person name="Fung E."/>
            <person name="Roncaglia P."/>
            <person name="Rowley D."/>
            <person name="Amedeo P."/>
            <person name="Bruno D."/>
            <person name="Vamathevan J."/>
            <person name="Miranda M."/>
            <person name="Anderson I.J."/>
            <person name="Fraser J.A."/>
            <person name="Allen J.E."/>
            <person name="Bosdet I.E."/>
            <person name="Brent M.R."/>
            <person name="Chiu R."/>
            <person name="Doering T.L."/>
            <person name="Donlin M.J."/>
            <person name="D'Souza C.A."/>
            <person name="Fox D.S."/>
            <person name="Grinberg V."/>
            <person name="Fu J."/>
            <person name="Fukushima M."/>
            <person name="Haas B.J."/>
            <person name="Huang J.C."/>
            <person name="Janbon G."/>
            <person name="Jones S.J.M."/>
            <person name="Koo H.L."/>
            <person name="Krzywinski M.I."/>
            <person name="Kwon-Chung K.J."/>
            <person name="Lengeler K.B."/>
            <person name="Maiti R."/>
            <person name="Marra M.A."/>
            <person name="Marra R.E."/>
            <person name="Mathewson C.A."/>
            <person name="Mitchell T.G."/>
            <person name="Pertea M."/>
            <person name="Riggs F.R."/>
            <person name="Salzberg S.L."/>
            <person name="Schein J.E."/>
            <person name="Shvartsbeyn A."/>
            <person name="Shin H."/>
            <person name="Shumway M."/>
            <person name="Specht C.A."/>
            <person name="Suh B.B."/>
            <person name="Tenney A."/>
            <person name="Utterback T.R."/>
            <person name="Wickes B.L."/>
            <person name="Wortman J.R."/>
            <person name="Wye N.H."/>
            <person name="Kronstad J.W."/>
            <person name="Lodge J.K."/>
            <person name="Heitman J."/>
            <person name="Davis R.W."/>
            <person name="Fraser C.M."/>
            <person name="Hyman R.W."/>
        </authorList>
    </citation>
    <scope>NUCLEOTIDE SEQUENCE [LARGE SCALE GENOMIC DNA]</scope>
    <source>
        <strain>JEC21 / ATCC MYA-565</strain>
    </source>
</reference>
<sequence length="948" mass="102839">MADDIELNFAVPASGLVRQVAPKKGGRWTDRVRAKREARDAFKSMKANHLTVQNPSMPTVSASELVPKPAVIKPAPTSASVSRHPQPKSQVVAPPRFTNATAGPSRPAPSPQAASSNVPKSASIPAPATIKHRTSLPTNAFERPPLPPQAGPSRPHPAEKLKTPQFISSLFTSAPLPGVKSSVAPEISTGAPSNAPVDTTTFQGLGLNKLLINHLKGKMGVEKPTGIQRNCLPYMLSSPLNPDKKAGDEGPKEEPLRDVLIQAQTGSGKTLSYLLPIVQTLLPLSRLSYIDRSIGTLAIILAPTRELAQQISKVLEQLLHMSFAASKEGSDDEDEDDRPFTRWLVSGLLTGGSTRTHEKAKLRKGVPILVSTPGRLLDHLQNTMSFQCAKTMFLVLDEADRLMDLGFEETIQGIIKALEGRRRNEINIEKEMDKEGGGTMRWPFWDRGRLNVLCSATVDAKVERLAGAALRDPVLFRSEKDEAEAKKKAEGKDDAVIKALNEAQAIVIPQESEEKFTPPSQLSQKYVVLPTKLRLVALVALLRSLISSVAKGISVSNGTKVIVFLSSTDAVDFHWKLLGGVQMGQQGQQADGEKEEDEEEEGESVEERESDGESKAKKSKRKAKSKSTDDIVSLASPLFPNTTLHRLHGSLPLRTRLASLKAFATSSSQPSVLFATSVASRGLDLPLVRAVVQYDLPTEGGANEYVHRVGRTARAGKGGEAWAFVSPSEEGWVKWIEGKMGAAEGKSGVNLGQVGVEDVLRKGFGGKSYEYEARATDVQLSFENWVLASEQNAALARKAFASFVRAYSTHPLEEKQFFHTKLLHLGHLAKSFALREAPAQLASALSAGKSKRPKSKAASSATHPGKRKRDEDEDEMEERGGKELTARNETERRMYEAVRKQGRTIKSGGKLGEFSGKGQNKGQKAAATGGEFHIVNTGELERLVARRK</sequence>
<comment type="function">
    <text evidence="1">ATP-binding RNA helicase involved in the biogenesis of 60S ribosomal subunits and is required for the normal formation of 25S and 5.8S rRNAs.</text>
</comment>
<comment type="catalytic activity">
    <reaction>
        <text>ATP + H2O = ADP + phosphate + H(+)</text>
        <dbReference type="Rhea" id="RHEA:13065"/>
        <dbReference type="ChEBI" id="CHEBI:15377"/>
        <dbReference type="ChEBI" id="CHEBI:15378"/>
        <dbReference type="ChEBI" id="CHEBI:30616"/>
        <dbReference type="ChEBI" id="CHEBI:43474"/>
        <dbReference type="ChEBI" id="CHEBI:456216"/>
        <dbReference type="EC" id="3.6.4.13"/>
    </reaction>
</comment>
<comment type="subcellular location">
    <subcellularLocation>
        <location evidence="1">Nucleus</location>
        <location evidence="1">Nucleolus</location>
    </subcellularLocation>
</comment>
<comment type="domain">
    <text>The Q motif is unique to and characteristic of the DEAD box family of RNA helicases and controls ATP binding and hydrolysis.</text>
</comment>
<comment type="similarity">
    <text evidence="5">Belongs to the DEAD box helicase family. DDX31/DBP7 subfamily.</text>
</comment>
<feature type="chain" id="PRO_0000256026" description="ATP-dependent RNA helicase DBP7">
    <location>
        <begin position="1"/>
        <end position="948"/>
    </location>
</feature>
<feature type="domain" description="Helicase ATP-binding" evidence="2">
    <location>
        <begin position="250"/>
        <end position="476"/>
    </location>
</feature>
<feature type="domain" description="Helicase C-terminal" evidence="3">
    <location>
        <begin position="597"/>
        <end position="757"/>
    </location>
</feature>
<feature type="region of interest" description="Disordered" evidence="4">
    <location>
        <begin position="43"/>
        <end position="160"/>
    </location>
</feature>
<feature type="region of interest" description="Disordered" evidence="4">
    <location>
        <begin position="583"/>
        <end position="626"/>
    </location>
</feature>
<feature type="region of interest" description="Disordered" evidence="4">
    <location>
        <begin position="844"/>
        <end position="929"/>
    </location>
</feature>
<feature type="short sequence motif" description="Q motif">
    <location>
        <begin position="200"/>
        <end position="229"/>
    </location>
</feature>
<feature type="short sequence motif" description="DEAD box">
    <location>
        <begin position="397"/>
        <end position="400"/>
    </location>
</feature>
<feature type="compositionally biased region" description="Polar residues" evidence="4">
    <location>
        <begin position="50"/>
        <end position="62"/>
    </location>
</feature>
<feature type="compositionally biased region" description="Polar residues" evidence="4">
    <location>
        <begin position="77"/>
        <end position="89"/>
    </location>
</feature>
<feature type="compositionally biased region" description="Acidic residues" evidence="4">
    <location>
        <begin position="593"/>
        <end position="604"/>
    </location>
</feature>
<feature type="compositionally biased region" description="Basic and acidic residues" evidence="4">
    <location>
        <begin position="605"/>
        <end position="616"/>
    </location>
</feature>
<feature type="compositionally biased region" description="Basic and acidic residues" evidence="4">
    <location>
        <begin position="878"/>
        <end position="899"/>
    </location>
</feature>
<feature type="binding site" evidence="2">
    <location>
        <begin position="263"/>
        <end position="270"/>
    </location>
    <ligand>
        <name>ATP</name>
        <dbReference type="ChEBI" id="CHEBI:30616"/>
    </ligand>
</feature>
<evidence type="ECO:0000250" key="1"/>
<evidence type="ECO:0000255" key="2">
    <source>
        <dbReference type="PROSITE-ProRule" id="PRU00541"/>
    </source>
</evidence>
<evidence type="ECO:0000255" key="3">
    <source>
        <dbReference type="PROSITE-ProRule" id="PRU00542"/>
    </source>
</evidence>
<evidence type="ECO:0000256" key="4">
    <source>
        <dbReference type="SAM" id="MobiDB-lite"/>
    </source>
</evidence>
<evidence type="ECO:0000305" key="5"/>
<dbReference type="EC" id="3.6.4.13"/>
<dbReference type="EMBL" id="AE017350">
    <property type="protein sequence ID" value="AAW45820.1"/>
    <property type="molecule type" value="Genomic_DNA"/>
</dbReference>
<dbReference type="RefSeq" id="XP_567337.1">
    <property type="nucleotide sequence ID" value="XM_567337.1"/>
</dbReference>
<dbReference type="SMR" id="P0CQ94"/>
<dbReference type="FunCoup" id="P0CQ94">
    <property type="interactions" value="547"/>
</dbReference>
<dbReference type="STRING" id="214684.P0CQ94"/>
<dbReference type="PaxDb" id="214684-P0CQ94"/>
<dbReference type="EnsemblFungi" id="AAW45820">
    <property type="protein sequence ID" value="AAW45820"/>
    <property type="gene ID" value="CNJ01590"/>
</dbReference>
<dbReference type="GeneID" id="3254316"/>
<dbReference type="KEGG" id="cne:CNJ01590"/>
<dbReference type="VEuPathDB" id="FungiDB:CNJ01590"/>
<dbReference type="eggNOG" id="KOG0348">
    <property type="taxonomic scope" value="Eukaryota"/>
</dbReference>
<dbReference type="HOGENOM" id="CLU_003041_26_2_1"/>
<dbReference type="InParanoid" id="P0CQ94"/>
<dbReference type="OMA" id="QMGFERW"/>
<dbReference type="OrthoDB" id="422663at2759"/>
<dbReference type="Proteomes" id="UP000002149">
    <property type="component" value="Chromosome 10"/>
</dbReference>
<dbReference type="GO" id="GO:0005730">
    <property type="term" value="C:nucleolus"/>
    <property type="evidence" value="ECO:0007669"/>
    <property type="project" value="UniProtKB-SubCell"/>
</dbReference>
<dbReference type="GO" id="GO:0005634">
    <property type="term" value="C:nucleus"/>
    <property type="evidence" value="ECO:0000318"/>
    <property type="project" value="GO_Central"/>
</dbReference>
<dbReference type="GO" id="GO:0005524">
    <property type="term" value="F:ATP binding"/>
    <property type="evidence" value="ECO:0007669"/>
    <property type="project" value="UniProtKB-KW"/>
</dbReference>
<dbReference type="GO" id="GO:0016887">
    <property type="term" value="F:ATP hydrolysis activity"/>
    <property type="evidence" value="ECO:0007669"/>
    <property type="project" value="RHEA"/>
</dbReference>
<dbReference type="GO" id="GO:0003723">
    <property type="term" value="F:RNA binding"/>
    <property type="evidence" value="ECO:0007669"/>
    <property type="project" value="UniProtKB-KW"/>
</dbReference>
<dbReference type="GO" id="GO:0003724">
    <property type="term" value="F:RNA helicase activity"/>
    <property type="evidence" value="ECO:0007669"/>
    <property type="project" value="UniProtKB-EC"/>
</dbReference>
<dbReference type="GO" id="GO:0042254">
    <property type="term" value="P:ribosome biogenesis"/>
    <property type="evidence" value="ECO:0000318"/>
    <property type="project" value="GO_Central"/>
</dbReference>
<dbReference type="GO" id="GO:0006364">
    <property type="term" value="P:rRNA processing"/>
    <property type="evidence" value="ECO:0007669"/>
    <property type="project" value="UniProtKB-KW"/>
</dbReference>
<dbReference type="CDD" id="cd18787">
    <property type="entry name" value="SF2_C_DEAD"/>
    <property type="match status" value="1"/>
</dbReference>
<dbReference type="Gene3D" id="3.40.50.300">
    <property type="entry name" value="P-loop containing nucleotide triphosphate hydrolases"/>
    <property type="match status" value="2"/>
</dbReference>
<dbReference type="InterPro" id="IPR011545">
    <property type="entry name" value="DEAD/DEAH_box_helicase_dom"/>
</dbReference>
<dbReference type="InterPro" id="IPR014001">
    <property type="entry name" value="Helicase_ATP-bd"/>
</dbReference>
<dbReference type="InterPro" id="IPR001650">
    <property type="entry name" value="Helicase_C-like"/>
</dbReference>
<dbReference type="InterPro" id="IPR027417">
    <property type="entry name" value="P-loop_NTPase"/>
</dbReference>
<dbReference type="InterPro" id="IPR000629">
    <property type="entry name" value="RNA-helicase_DEAD-box_CS"/>
</dbReference>
<dbReference type="InterPro" id="IPR014014">
    <property type="entry name" value="RNA_helicase_DEAD_Q_motif"/>
</dbReference>
<dbReference type="InterPro" id="IPR025313">
    <property type="entry name" value="SPB4-like_CTE"/>
</dbReference>
<dbReference type="PANTHER" id="PTHR24031">
    <property type="entry name" value="RNA HELICASE"/>
    <property type="match status" value="1"/>
</dbReference>
<dbReference type="Pfam" id="PF13959">
    <property type="entry name" value="CTE_SPB4"/>
    <property type="match status" value="1"/>
</dbReference>
<dbReference type="Pfam" id="PF00270">
    <property type="entry name" value="DEAD"/>
    <property type="match status" value="1"/>
</dbReference>
<dbReference type="Pfam" id="PF00271">
    <property type="entry name" value="Helicase_C"/>
    <property type="match status" value="1"/>
</dbReference>
<dbReference type="SMART" id="SM00487">
    <property type="entry name" value="DEXDc"/>
    <property type="match status" value="1"/>
</dbReference>
<dbReference type="SMART" id="SM01178">
    <property type="entry name" value="DUF4217"/>
    <property type="match status" value="1"/>
</dbReference>
<dbReference type="SMART" id="SM00490">
    <property type="entry name" value="HELICc"/>
    <property type="match status" value="1"/>
</dbReference>
<dbReference type="SUPFAM" id="SSF52540">
    <property type="entry name" value="P-loop containing nucleoside triphosphate hydrolases"/>
    <property type="match status" value="2"/>
</dbReference>
<dbReference type="PROSITE" id="PS00039">
    <property type="entry name" value="DEAD_ATP_HELICASE"/>
    <property type="match status" value="1"/>
</dbReference>
<dbReference type="PROSITE" id="PS51192">
    <property type="entry name" value="HELICASE_ATP_BIND_1"/>
    <property type="match status" value="1"/>
</dbReference>
<dbReference type="PROSITE" id="PS51194">
    <property type="entry name" value="HELICASE_CTER"/>
    <property type="match status" value="1"/>
</dbReference>
<dbReference type="PROSITE" id="PS51195">
    <property type="entry name" value="Q_MOTIF"/>
    <property type="match status" value="1"/>
</dbReference>
<name>DBP7_CRYNJ</name>
<protein>
    <recommendedName>
        <fullName>ATP-dependent RNA helicase DBP7</fullName>
        <ecNumber>3.6.4.13</ecNumber>
    </recommendedName>
</protein>
<keyword id="KW-0067">ATP-binding</keyword>
<keyword id="KW-0347">Helicase</keyword>
<keyword id="KW-0378">Hydrolase</keyword>
<keyword id="KW-0547">Nucleotide-binding</keyword>
<keyword id="KW-0539">Nucleus</keyword>
<keyword id="KW-1185">Reference proteome</keyword>
<keyword id="KW-0690">Ribosome biogenesis</keyword>
<keyword id="KW-0694">RNA-binding</keyword>
<keyword id="KW-0698">rRNA processing</keyword>
<accession>P0CQ94</accession>
<accession>Q55KZ7</accession>
<accession>Q5KAI2</accession>
<organism>
    <name type="scientific">Cryptococcus neoformans var. neoformans serotype D (strain JEC21 / ATCC MYA-565)</name>
    <name type="common">Filobasidiella neoformans</name>
    <dbReference type="NCBI Taxonomy" id="214684"/>
    <lineage>
        <taxon>Eukaryota</taxon>
        <taxon>Fungi</taxon>
        <taxon>Dikarya</taxon>
        <taxon>Basidiomycota</taxon>
        <taxon>Agaricomycotina</taxon>
        <taxon>Tremellomycetes</taxon>
        <taxon>Tremellales</taxon>
        <taxon>Cryptococcaceae</taxon>
        <taxon>Cryptococcus</taxon>
        <taxon>Cryptococcus neoformans species complex</taxon>
    </lineage>
</organism>
<proteinExistence type="inferred from homology"/>